<organism>
    <name type="scientific">Escherichia coli (strain K12)</name>
    <dbReference type="NCBI Taxonomy" id="83333"/>
    <lineage>
        <taxon>Bacteria</taxon>
        <taxon>Pseudomonadati</taxon>
        <taxon>Pseudomonadota</taxon>
        <taxon>Gammaproteobacteria</taxon>
        <taxon>Enterobacterales</taxon>
        <taxon>Enterobacteriaceae</taxon>
        <taxon>Escherichia</taxon>
    </lineage>
</organism>
<dbReference type="EMBL" id="AF106329">
    <property type="protein sequence ID" value="AAD47180.1"/>
    <property type="molecule type" value="Genomic_DNA"/>
</dbReference>
<dbReference type="EMBL" id="AP001918">
    <property type="protein sequence ID" value="BAA97924.1"/>
    <property type="molecule type" value="Genomic_DNA"/>
</dbReference>
<dbReference type="RefSeq" id="NP_061433.1">
    <property type="nucleotide sequence ID" value="NC_002483.1"/>
</dbReference>
<dbReference type="KEGG" id="ecoc:C3026_24370"/>
<dbReference type="InterPro" id="IPR009811">
    <property type="entry name" value="DUF1380"/>
</dbReference>
<dbReference type="Pfam" id="PF07128">
    <property type="entry name" value="DUF1380"/>
    <property type="match status" value="1"/>
</dbReference>
<feature type="chain" id="PRO_0000262311" description="Uncharacterized protein YubF">
    <location>
        <begin position="1"/>
        <end position="144"/>
    </location>
</feature>
<geneLocation type="plasmid">
    <name>F</name>
</geneLocation>
<proteinExistence type="predicted"/>
<keyword id="KW-0614">Plasmid</keyword>
<accession>Q9S4X0</accession>
<accession>Q7AJQ3</accession>
<gene>
    <name type="primary">yubF</name>
    <name type="synonym">yffA</name>
    <name type="ordered locus">ECOK12F054</name>
</gene>
<reference key="1">
    <citation type="journal article" date="1999" name="Plasmid">
        <title>Nucleotide sequence of the F plasmid leading region.</title>
        <authorList>
            <person name="Manwaring N.P."/>
            <person name="Skurray R.A."/>
            <person name="Firth N."/>
        </authorList>
    </citation>
    <scope>NUCLEOTIDE SEQUENCE [GENOMIC DNA]</scope>
</reference>
<reference key="2">
    <citation type="submission" date="2000-04" db="EMBL/GenBank/DDBJ databases">
        <title>Complete nucleotide sequence of the F plasmid: its implications for organization and diversification of plasmid genomes.</title>
        <authorList>
            <person name="Shimizu H."/>
            <person name="Saitoh Y."/>
            <person name="Suda Y."/>
            <person name="Uehara K."/>
            <person name="Sampei G."/>
            <person name="Mizobuchi K."/>
        </authorList>
    </citation>
    <scope>NUCLEOTIDE SEQUENCE [LARGE SCALE GENOMIC DNA]</scope>
    <source>
        <strain>K12 / CR63</strain>
    </source>
</reference>
<protein>
    <recommendedName>
        <fullName>Uncharacterized protein YubF</fullName>
    </recommendedName>
</protein>
<name>YUBF_ECOLI</name>
<sequence>MYGTCETLCRELAAKYPGYTPLMLVIWSPEEIQALADGMDISLSDPEIRTVLARLEDIPEDQRIESGISSAAAMEIISNVSENRQVTVPAELLASLIQTAEQALWKREWAARDYGLAVPECVTRRQAVVNQARILLKNNTHENG</sequence>